<sequence>MAKTIKITQTRSAIGRLPKHKATLLGLGLRRIGHTVEREDTPAIRGMINAVSFMVKVEE</sequence>
<comment type="subunit">
    <text evidence="1">Part of the 50S ribosomal subunit.</text>
</comment>
<comment type="similarity">
    <text evidence="1">Belongs to the universal ribosomal protein uL30 family.</text>
</comment>
<keyword id="KW-0687">Ribonucleoprotein</keyword>
<keyword id="KW-0689">Ribosomal protein</keyword>
<accession>B6I216</accession>
<proteinExistence type="inferred from homology"/>
<protein>
    <recommendedName>
        <fullName evidence="1">Large ribosomal subunit protein uL30</fullName>
    </recommendedName>
    <alternativeName>
        <fullName evidence="2">50S ribosomal protein L30</fullName>
    </alternativeName>
</protein>
<name>RL30_ECOSE</name>
<feature type="chain" id="PRO_1000144681" description="Large ribosomal subunit protein uL30">
    <location>
        <begin position="1"/>
        <end position="59"/>
    </location>
</feature>
<gene>
    <name evidence="1" type="primary">rpmD</name>
    <name type="ordered locus">ECSE_3577</name>
</gene>
<reference key="1">
    <citation type="journal article" date="2008" name="DNA Res.">
        <title>Complete genome sequence and comparative analysis of the wild-type commensal Escherichia coli strain SE11 isolated from a healthy adult.</title>
        <authorList>
            <person name="Oshima K."/>
            <person name="Toh H."/>
            <person name="Ogura Y."/>
            <person name="Sasamoto H."/>
            <person name="Morita H."/>
            <person name="Park S.-H."/>
            <person name="Ooka T."/>
            <person name="Iyoda S."/>
            <person name="Taylor T.D."/>
            <person name="Hayashi T."/>
            <person name="Itoh K."/>
            <person name="Hattori M."/>
        </authorList>
    </citation>
    <scope>NUCLEOTIDE SEQUENCE [LARGE SCALE GENOMIC DNA]</scope>
    <source>
        <strain>SE11</strain>
    </source>
</reference>
<dbReference type="EMBL" id="AP009240">
    <property type="protein sequence ID" value="BAG79101.1"/>
    <property type="molecule type" value="Genomic_DNA"/>
</dbReference>
<dbReference type="RefSeq" id="WP_001140433.1">
    <property type="nucleotide sequence ID" value="NC_011415.1"/>
</dbReference>
<dbReference type="SMR" id="B6I216"/>
<dbReference type="GeneID" id="93778685"/>
<dbReference type="KEGG" id="ecy:ECSE_3577"/>
<dbReference type="HOGENOM" id="CLU_131047_1_4_6"/>
<dbReference type="Proteomes" id="UP000008199">
    <property type="component" value="Chromosome"/>
</dbReference>
<dbReference type="GO" id="GO:0022625">
    <property type="term" value="C:cytosolic large ribosomal subunit"/>
    <property type="evidence" value="ECO:0007669"/>
    <property type="project" value="TreeGrafter"/>
</dbReference>
<dbReference type="GO" id="GO:0003735">
    <property type="term" value="F:structural constituent of ribosome"/>
    <property type="evidence" value="ECO:0007669"/>
    <property type="project" value="InterPro"/>
</dbReference>
<dbReference type="GO" id="GO:0006412">
    <property type="term" value="P:translation"/>
    <property type="evidence" value="ECO:0007669"/>
    <property type="project" value="UniProtKB-UniRule"/>
</dbReference>
<dbReference type="CDD" id="cd01658">
    <property type="entry name" value="Ribosomal_L30"/>
    <property type="match status" value="1"/>
</dbReference>
<dbReference type="FunFam" id="3.30.1390.20:FF:000001">
    <property type="entry name" value="50S ribosomal protein L30"/>
    <property type="match status" value="1"/>
</dbReference>
<dbReference type="Gene3D" id="3.30.1390.20">
    <property type="entry name" value="Ribosomal protein L30, ferredoxin-like fold domain"/>
    <property type="match status" value="1"/>
</dbReference>
<dbReference type="HAMAP" id="MF_01371_B">
    <property type="entry name" value="Ribosomal_uL30_B"/>
    <property type="match status" value="1"/>
</dbReference>
<dbReference type="InterPro" id="IPR036919">
    <property type="entry name" value="Ribo_uL30_ferredoxin-like_sf"/>
</dbReference>
<dbReference type="InterPro" id="IPR005996">
    <property type="entry name" value="Ribosomal_uL30_bac-type"/>
</dbReference>
<dbReference type="InterPro" id="IPR018038">
    <property type="entry name" value="Ribosomal_uL30_CS"/>
</dbReference>
<dbReference type="InterPro" id="IPR016082">
    <property type="entry name" value="Ribosomal_uL30_ferredoxin-like"/>
</dbReference>
<dbReference type="NCBIfam" id="TIGR01308">
    <property type="entry name" value="rpmD_bact"/>
    <property type="match status" value="1"/>
</dbReference>
<dbReference type="PANTHER" id="PTHR15892:SF2">
    <property type="entry name" value="LARGE RIBOSOMAL SUBUNIT PROTEIN UL30M"/>
    <property type="match status" value="1"/>
</dbReference>
<dbReference type="PANTHER" id="PTHR15892">
    <property type="entry name" value="MITOCHONDRIAL RIBOSOMAL PROTEIN L30"/>
    <property type="match status" value="1"/>
</dbReference>
<dbReference type="Pfam" id="PF00327">
    <property type="entry name" value="Ribosomal_L30"/>
    <property type="match status" value="1"/>
</dbReference>
<dbReference type="PIRSF" id="PIRSF002211">
    <property type="entry name" value="Ribosomal_L30_bac-type"/>
    <property type="match status" value="1"/>
</dbReference>
<dbReference type="SUPFAM" id="SSF55129">
    <property type="entry name" value="Ribosomal protein L30p/L7e"/>
    <property type="match status" value="1"/>
</dbReference>
<dbReference type="PROSITE" id="PS00634">
    <property type="entry name" value="RIBOSOMAL_L30"/>
    <property type="match status" value="1"/>
</dbReference>
<evidence type="ECO:0000255" key="1">
    <source>
        <dbReference type="HAMAP-Rule" id="MF_01371"/>
    </source>
</evidence>
<evidence type="ECO:0000305" key="2"/>
<organism>
    <name type="scientific">Escherichia coli (strain SE11)</name>
    <dbReference type="NCBI Taxonomy" id="409438"/>
    <lineage>
        <taxon>Bacteria</taxon>
        <taxon>Pseudomonadati</taxon>
        <taxon>Pseudomonadota</taxon>
        <taxon>Gammaproteobacteria</taxon>
        <taxon>Enterobacterales</taxon>
        <taxon>Enterobacteriaceae</taxon>
        <taxon>Escherichia</taxon>
    </lineage>
</organism>